<sequence length="228" mass="25186">MVDGRKPHINVGTIGHVDHGKTTLTAALTTVLAKRLSGEGNKSVKYDEIDKAPEEKARGITISTAHVEYETENRHYAHVDCPGHADYIKNMITGAAQMDAAILVVSATDGAMPQTREHILLAKQVGVKDIVVWMNKCDVVDDEEMLSLVEMEIRELLTKYGYPGDDIDVVKGSAVKALEEESADGVWSEKIMELMNPLEKIDLPIREKDNPFVRSIEDVMFNTPGEAQ</sequence>
<protein>
    <recommendedName>
        <fullName>Putative elongation factor Tu-like protein</fullName>
    </recommendedName>
</protein>
<proteinExistence type="uncertain"/>
<organism>
    <name type="scientific">Ehrlichia ruminantium (strain Welgevonden)</name>
    <dbReference type="NCBI Taxonomy" id="254945"/>
    <lineage>
        <taxon>Bacteria</taxon>
        <taxon>Pseudomonadati</taxon>
        <taxon>Pseudomonadota</taxon>
        <taxon>Alphaproteobacteria</taxon>
        <taxon>Rickettsiales</taxon>
        <taxon>Anaplasmataceae</taxon>
        <taxon>Ehrlichia</taxon>
    </lineage>
</organism>
<evidence type="ECO:0000255" key="1">
    <source>
        <dbReference type="PROSITE-ProRule" id="PRU01059"/>
    </source>
</evidence>
<evidence type="ECO:0000305" key="2"/>
<accession>Q5FCW3</accession>
<dbReference type="EMBL" id="CR925678">
    <property type="protein sequence ID" value="CAI26657.1"/>
    <property type="molecule type" value="Genomic_DNA"/>
</dbReference>
<dbReference type="SMR" id="Q5FCW3"/>
<dbReference type="KEGG" id="erw:ERWE_CDS_01630"/>
<dbReference type="HOGENOM" id="CLU_007265_4_0_5"/>
<dbReference type="Proteomes" id="UP000001021">
    <property type="component" value="Chromosome"/>
</dbReference>
<dbReference type="GO" id="GO:0005525">
    <property type="term" value="F:GTP binding"/>
    <property type="evidence" value="ECO:0007669"/>
    <property type="project" value="InterPro"/>
</dbReference>
<dbReference type="GO" id="GO:0003924">
    <property type="term" value="F:GTPase activity"/>
    <property type="evidence" value="ECO:0007669"/>
    <property type="project" value="InterPro"/>
</dbReference>
<dbReference type="GO" id="GO:0003746">
    <property type="term" value="F:translation elongation factor activity"/>
    <property type="evidence" value="ECO:0007669"/>
    <property type="project" value="TreeGrafter"/>
</dbReference>
<dbReference type="CDD" id="cd01884">
    <property type="entry name" value="EF_Tu"/>
    <property type="match status" value="1"/>
</dbReference>
<dbReference type="FunFam" id="3.40.50.300:FF:000003">
    <property type="entry name" value="Elongation factor Tu"/>
    <property type="match status" value="1"/>
</dbReference>
<dbReference type="Gene3D" id="3.40.50.300">
    <property type="entry name" value="P-loop containing nucleotide triphosphate hydrolases"/>
    <property type="match status" value="1"/>
</dbReference>
<dbReference type="InterPro" id="IPR041709">
    <property type="entry name" value="EF-Tu_GTP-bd"/>
</dbReference>
<dbReference type="InterPro" id="IPR050055">
    <property type="entry name" value="EF-Tu_GTPase"/>
</dbReference>
<dbReference type="InterPro" id="IPR031157">
    <property type="entry name" value="G_TR_CS"/>
</dbReference>
<dbReference type="InterPro" id="IPR027417">
    <property type="entry name" value="P-loop_NTPase"/>
</dbReference>
<dbReference type="InterPro" id="IPR005225">
    <property type="entry name" value="Small_GTP-bd"/>
</dbReference>
<dbReference type="InterPro" id="IPR000795">
    <property type="entry name" value="T_Tr_GTP-bd_dom"/>
</dbReference>
<dbReference type="NCBIfam" id="TIGR00231">
    <property type="entry name" value="small_GTP"/>
    <property type="match status" value="1"/>
</dbReference>
<dbReference type="PANTHER" id="PTHR43721:SF22">
    <property type="entry name" value="ELONGATION FACTOR TU, MITOCHONDRIAL"/>
    <property type="match status" value="1"/>
</dbReference>
<dbReference type="PANTHER" id="PTHR43721">
    <property type="entry name" value="ELONGATION FACTOR TU-RELATED"/>
    <property type="match status" value="1"/>
</dbReference>
<dbReference type="Pfam" id="PF00009">
    <property type="entry name" value="GTP_EFTU"/>
    <property type="match status" value="1"/>
</dbReference>
<dbReference type="PRINTS" id="PR00315">
    <property type="entry name" value="ELONGATNFCT"/>
</dbReference>
<dbReference type="SUPFAM" id="SSF52540">
    <property type="entry name" value="P-loop containing nucleoside triphosphate hydrolases"/>
    <property type="match status" value="1"/>
</dbReference>
<dbReference type="PROSITE" id="PS00301">
    <property type="entry name" value="G_TR_1"/>
    <property type="match status" value="1"/>
</dbReference>
<dbReference type="PROSITE" id="PS51722">
    <property type="entry name" value="G_TR_2"/>
    <property type="match status" value="1"/>
</dbReference>
<comment type="similarity">
    <text evidence="1">Belongs to the TRAFAC class translation factor GTPase superfamily. Classic translation factor GTPase family. EF-Tu/EF-1A subfamily.</text>
</comment>
<comment type="caution">
    <text evidence="2">Could be the product of a pseudogene. This gene is annotated as a frameshift-version of tuf in the genome; it would need 2 frameshifts to produce full-length protein.</text>
</comment>
<name>EFTUL_EHRRW</name>
<feature type="chain" id="PRO_0000337378" description="Putative elongation factor Tu-like protein">
    <location>
        <begin position="1"/>
        <end position="228"/>
    </location>
</feature>
<feature type="domain" description="tr-type G" evidence="1">
    <location>
        <begin position="6"/>
        <end position="212"/>
    </location>
</feature>
<feature type="region of interest" description="G1" evidence="1">
    <location>
        <begin position="15"/>
        <end position="22"/>
    </location>
</feature>
<feature type="region of interest" description="G2" evidence="1">
    <location>
        <begin position="59"/>
        <end position="63"/>
    </location>
</feature>
<feature type="region of interest" description="G3" evidence="1">
    <location>
        <begin position="80"/>
        <end position="83"/>
    </location>
</feature>
<feature type="region of interest" description="G4" evidence="1">
    <location>
        <begin position="135"/>
        <end position="138"/>
    </location>
</feature>
<feature type="region of interest" description="G5" evidence="1">
    <location>
        <begin position="173"/>
        <end position="175"/>
    </location>
</feature>
<gene>
    <name type="ordered locus">ERWE_CDS_01630</name>
</gene>
<reference key="1">
    <citation type="journal article" date="2006" name="J. Bacteriol.">
        <title>Comparative genomic analysis of three strains of Ehrlichia ruminantium reveals an active process of genome size plasticity.</title>
        <authorList>
            <person name="Frutos R."/>
            <person name="Viari A."/>
            <person name="Ferraz C."/>
            <person name="Morgat A."/>
            <person name="Eychenie S."/>
            <person name="Kandassamy Y."/>
            <person name="Chantal I."/>
            <person name="Bensaid A."/>
            <person name="Coissac E."/>
            <person name="Vachiery N."/>
            <person name="Demaille J."/>
            <person name="Martinez D."/>
        </authorList>
    </citation>
    <scope>NUCLEOTIDE SEQUENCE [LARGE SCALE GENOMIC DNA]</scope>
    <source>
        <strain>Welgevonden</strain>
    </source>
</reference>